<proteinExistence type="predicted"/>
<reference key="1">
    <citation type="journal article" date="1996" name="Microbiology">
        <title>Cloning and sequencing of a 40.6 kb segment in the 73 degrees-76 degrees region of the Bacillus subtilis chromosome containing genes for trehalose metabolism and acetoin utilization.</title>
        <authorList>
            <person name="Yamamoto H."/>
            <person name="Uchiyama S."/>
            <person name="Sekiguchi J."/>
        </authorList>
    </citation>
    <scope>NUCLEOTIDE SEQUENCE [GENOMIC DNA]</scope>
    <source>
        <strain>168 / AC327</strain>
    </source>
</reference>
<reference key="2">
    <citation type="journal article" date="1997" name="Nature">
        <title>The complete genome sequence of the Gram-positive bacterium Bacillus subtilis.</title>
        <authorList>
            <person name="Kunst F."/>
            <person name="Ogasawara N."/>
            <person name="Moszer I."/>
            <person name="Albertini A.M."/>
            <person name="Alloni G."/>
            <person name="Azevedo V."/>
            <person name="Bertero M.G."/>
            <person name="Bessieres P."/>
            <person name="Bolotin A."/>
            <person name="Borchert S."/>
            <person name="Borriss R."/>
            <person name="Boursier L."/>
            <person name="Brans A."/>
            <person name="Braun M."/>
            <person name="Brignell S.C."/>
            <person name="Bron S."/>
            <person name="Brouillet S."/>
            <person name="Bruschi C.V."/>
            <person name="Caldwell B."/>
            <person name="Capuano V."/>
            <person name="Carter N.M."/>
            <person name="Choi S.-K."/>
            <person name="Codani J.-J."/>
            <person name="Connerton I.F."/>
            <person name="Cummings N.J."/>
            <person name="Daniel R.A."/>
            <person name="Denizot F."/>
            <person name="Devine K.M."/>
            <person name="Duesterhoeft A."/>
            <person name="Ehrlich S.D."/>
            <person name="Emmerson P.T."/>
            <person name="Entian K.-D."/>
            <person name="Errington J."/>
            <person name="Fabret C."/>
            <person name="Ferrari E."/>
            <person name="Foulger D."/>
            <person name="Fritz C."/>
            <person name="Fujita M."/>
            <person name="Fujita Y."/>
            <person name="Fuma S."/>
            <person name="Galizzi A."/>
            <person name="Galleron N."/>
            <person name="Ghim S.-Y."/>
            <person name="Glaser P."/>
            <person name="Goffeau A."/>
            <person name="Golightly E.J."/>
            <person name="Grandi G."/>
            <person name="Guiseppi G."/>
            <person name="Guy B.J."/>
            <person name="Haga K."/>
            <person name="Haiech J."/>
            <person name="Harwood C.R."/>
            <person name="Henaut A."/>
            <person name="Hilbert H."/>
            <person name="Holsappel S."/>
            <person name="Hosono S."/>
            <person name="Hullo M.-F."/>
            <person name="Itaya M."/>
            <person name="Jones L.-M."/>
            <person name="Joris B."/>
            <person name="Karamata D."/>
            <person name="Kasahara Y."/>
            <person name="Klaerr-Blanchard M."/>
            <person name="Klein C."/>
            <person name="Kobayashi Y."/>
            <person name="Koetter P."/>
            <person name="Koningstein G."/>
            <person name="Krogh S."/>
            <person name="Kumano M."/>
            <person name="Kurita K."/>
            <person name="Lapidus A."/>
            <person name="Lardinois S."/>
            <person name="Lauber J."/>
            <person name="Lazarevic V."/>
            <person name="Lee S.-M."/>
            <person name="Levine A."/>
            <person name="Liu H."/>
            <person name="Masuda S."/>
            <person name="Mauel C."/>
            <person name="Medigue C."/>
            <person name="Medina N."/>
            <person name="Mellado R.P."/>
            <person name="Mizuno M."/>
            <person name="Moestl D."/>
            <person name="Nakai S."/>
            <person name="Noback M."/>
            <person name="Noone D."/>
            <person name="O'Reilly M."/>
            <person name="Ogawa K."/>
            <person name="Ogiwara A."/>
            <person name="Oudega B."/>
            <person name="Park S.-H."/>
            <person name="Parro V."/>
            <person name="Pohl T.M."/>
            <person name="Portetelle D."/>
            <person name="Porwollik S."/>
            <person name="Prescott A.M."/>
            <person name="Presecan E."/>
            <person name="Pujic P."/>
            <person name="Purnelle B."/>
            <person name="Rapoport G."/>
            <person name="Rey M."/>
            <person name="Reynolds S."/>
            <person name="Rieger M."/>
            <person name="Rivolta C."/>
            <person name="Rocha E."/>
            <person name="Roche B."/>
            <person name="Rose M."/>
            <person name="Sadaie Y."/>
            <person name="Sato T."/>
            <person name="Scanlan E."/>
            <person name="Schleich S."/>
            <person name="Schroeter R."/>
            <person name="Scoffone F."/>
            <person name="Sekiguchi J."/>
            <person name="Sekowska A."/>
            <person name="Seror S.J."/>
            <person name="Serror P."/>
            <person name="Shin B.-S."/>
            <person name="Soldo B."/>
            <person name="Sorokin A."/>
            <person name="Tacconi E."/>
            <person name="Takagi T."/>
            <person name="Takahashi H."/>
            <person name="Takemaru K."/>
            <person name="Takeuchi M."/>
            <person name="Tamakoshi A."/>
            <person name="Tanaka T."/>
            <person name="Terpstra P."/>
            <person name="Tognoni A."/>
            <person name="Tosato V."/>
            <person name="Uchiyama S."/>
            <person name="Vandenbol M."/>
            <person name="Vannier F."/>
            <person name="Vassarotti A."/>
            <person name="Viari A."/>
            <person name="Wambutt R."/>
            <person name="Wedler E."/>
            <person name="Wedler H."/>
            <person name="Weitzenegger T."/>
            <person name="Winters P."/>
            <person name="Wipat A."/>
            <person name="Yamamoto H."/>
            <person name="Yamane K."/>
            <person name="Yasumoto K."/>
            <person name="Yata K."/>
            <person name="Yoshida K."/>
            <person name="Yoshikawa H.-F."/>
            <person name="Zumstein E."/>
            <person name="Yoshikawa H."/>
            <person name="Danchin A."/>
        </authorList>
    </citation>
    <scope>NUCLEOTIDE SEQUENCE [LARGE SCALE GENOMIC DNA]</scope>
    <source>
        <strain>168</strain>
    </source>
</reference>
<reference key="3">
    <citation type="journal article" date="1988" name="Gene">
        <title>Characterization of signal-sequence-coding regions selected from the Bacillus subtilis chromosome.</title>
        <authorList>
            <person name="Smith H."/>
            <person name="de Jong A."/>
            <person name="Bron S."/>
            <person name="Venema G."/>
        </authorList>
    </citation>
    <scope>NUCLEOTIDE SEQUENCE [GENOMIC DNA] OF 1-35</scope>
</reference>
<reference key="4">
    <citation type="submission" date="1997-05" db="EMBL/GenBank/DDBJ databases">
        <authorList>
            <person name="Huang M."/>
        </authorList>
    </citation>
    <scope>NUCLEOTIDE SEQUENCE [GENOMIC DNA] OF 34-229</scope>
    <source>
        <strain>168</strain>
    </source>
</reference>
<organism>
    <name type="scientific">Bacillus subtilis (strain 168)</name>
    <dbReference type="NCBI Taxonomy" id="224308"/>
    <lineage>
        <taxon>Bacteria</taxon>
        <taxon>Bacillati</taxon>
        <taxon>Bacillota</taxon>
        <taxon>Bacilli</taxon>
        <taxon>Bacillales</taxon>
        <taxon>Bacillaceae</taxon>
        <taxon>Bacillus</taxon>
    </lineage>
</organism>
<protein>
    <recommendedName>
        <fullName>Uncharacterized protein YfjL</fullName>
    </recommendedName>
    <alternativeName>
        <fullName>PSPB19'</fullName>
    </alternativeName>
</protein>
<feature type="chain" id="PRO_0000049529" description="Uncharacterized protein YfjL">
    <location>
        <begin position="1"/>
        <end position="229"/>
    </location>
</feature>
<feature type="sequence conflict" description="In Ref. 3; AAA22828." evidence="1" ref="3">
    <original>FSKNAAE</original>
    <variation>LESTAQA</variation>
    <location>
        <begin position="29"/>
        <end position="35"/>
    </location>
</feature>
<evidence type="ECO:0000305" key="1"/>
<accession>P40773</accession>
<accession>O31548</accession>
<name>YFJL_BACSU</name>
<dbReference type="EMBL" id="D78509">
    <property type="protein sequence ID" value="BAA24297.1"/>
    <property type="molecule type" value="Genomic_DNA"/>
</dbReference>
<dbReference type="EMBL" id="AL009126">
    <property type="protein sequence ID" value="CAB12634.1"/>
    <property type="molecule type" value="Genomic_DNA"/>
</dbReference>
<dbReference type="EMBL" id="M22912">
    <property type="protein sequence ID" value="AAA22828.1"/>
    <property type="molecule type" value="Genomic_DNA"/>
</dbReference>
<dbReference type="EMBL" id="AF006075">
    <property type="protein sequence ID" value="AAC05581.1"/>
    <property type="molecule type" value="Genomic_DNA"/>
</dbReference>
<dbReference type="PIR" id="C69806">
    <property type="entry name" value="C69806"/>
</dbReference>
<dbReference type="RefSeq" id="NP_388686.1">
    <property type="nucleotide sequence ID" value="NC_000964.3"/>
</dbReference>
<dbReference type="RefSeq" id="WP_003243897.1">
    <property type="nucleotide sequence ID" value="NZ_OZ025638.1"/>
</dbReference>
<dbReference type="FunCoup" id="P40773">
    <property type="interactions" value="158"/>
</dbReference>
<dbReference type="STRING" id="224308.BSU08050"/>
<dbReference type="PaxDb" id="224308-BSU08050"/>
<dbReference type="DNASU" id="939202"/>
<dbReference type="EnsemblBacteria" id="CAB12634">
    <property type="protein sequence ID" value="CAB12634"/>
    <property type="gene ID" value="BSU_08050"/>
</dbReference>
<dbReference type="GeneID" id="939202"/>
<dbReference type="KEGG" id="bsu:BSU08050"/>
<dbReference type="PATRIC" id="fig|224308.179.peg.871"/>
<dbReference type="InParanoid" id="P40773"/>
<dbReference type="OrthoDB" id="2895362at2"/>
<dbReference type="BioCyc" id="BSUB:BSU08050-MONOMER"/>
<dbReference type="Proteomes" id="UP000001570">
    <property type="component" value="Chromosome"/>
</dbReference>
<dbReference type="InterPro" id="IPR056905">
    <property type="entry name" value="YfjL_C"/>
</dbReference>
<dbReference type="Pfam" id="PF24911">
    <property type="entry name" value="YfjL_C"/>
    <property type="match status" value="1"/>
</dbReference>
<dbReference type="Pfam" id="PF25425">
    <property type="entry name" value="YfjL_N"/>
    <property type="match status" value="1"/>
</dbReference>
<dbReference type="PROSITE" id="PS51257">
    <property type="entry name" value="PROKAR_LIPOPROTEIN"/>
    <property type="match status" value="1"/>
</dbReference>
<keyword id="KW-1185">Reference proteome</keyword>
<gene>
    <name type="primary">yfjL</name>
    <name type="synonym">yztA</name>
    <name type="ordered locus">BSU08050</name>
</gene>
<sequence>MKKLVFGLLAIVLFGCGLYIYHVWFGDPFSKNAAEQKLVSYVKQTYPKKEIKITNGVYNAKTSEYVFEATSQSHRYPMCTKGFLHPKVTCDGIEEAYTESVAKHVNEEATKAIEADLKKAVPRFIKADAALSIENGQFTLDTKWNKKLAEKAPMSMTIQLDASGLSKTDAAKMAETVRKTLNEKGYTYSNGTIDCMQKDGDGGIGYVKYSIDFLSKAAIQSNDAEELGS</sequence>